<evidence type="ECO:0000250" key="1"/>
<evidence type="ECO:0000250" key="2">
    <source>
        <dbReference type="UniProtKB" id="P13864"/>
    </source>
</evidence>
<evidence type="ECO:0000250" key="3">
    <source>
        <dbReference type="UniProtKB" id="P26358"/>
    </source>
</evidence>
<evidence type="ECO:0000255" key="4"/>
<evidence type="ECO:0000255" key="5">
    <source>
        <dbReference type="PROSITE-ProRule" id="PRU00370"/>
    </source>
</evidence>
<evidence type="ECO:0000255" key="6">
    <source>
        <dbReference type="PROSITE-ProRule" id="PRU00509"/>
    </source>
</evidence>
<evidence type="ECO:0000255" key="7">
    <source>
        <dbReference type="PROSITE-ProRule" id="PRU01016"/>
    </source>
</evidence>
<evidence type="ECO:0000255" key="8">
    <source>
        <dbReference type="PROSITE-ProRule" id="PRU01260"/>
    </source>
</evidence>
<evidence type="ECO:0000255" key="9">
    <source>
        <dbReference type="PROSITE-ProRule" id="PRU10018"/>
    </source>
</evidence>
<evidence type="ECO:0000256" key="10">
    <source>
        <dbReference type="SAM" id="MobiDB-lite"/>
    </source>
</evidence>
<evidence type="ECO:0000305" key="11"/>
<evidence type="ECO:0007829" key="12">
    <source>
        <dbReference type="PDB" id="6PZV"/>
    </source>
</evidence>
<evidence type="ECO:0007829" key="13">
    <source>
        <dbReference type="PDB" id="7LMK"/>
    </source>
</evidence>
<dbReference type="EC" id="2.1.1.37"/>
<dbReference type="EMBL" id="AY244709">
    <property type="protein sequence ID" value="AAP20551.1"/>
    <property type="molecule type" value="mRNA"/>
</dbReference>
<dbReference type="EMBL" id="AY173048">
    <property type="protein sequence ID" value="AAO44952.1"/>
    <property type="molecule type" value="mRNA"/>
</dbReference>
<dbReference type="EMBL" id="BC114063">
    <property type="protein sequence ID" value="AAI14064.1"/>
    <property type="molecule type" value="mRNA"/>
</dbReference>
<dbReference type="RefSeq" id="NP_872592.2">
    <property type="nucleotide sequence ID" value="NM_182651.2"/>
</dbReference>
<dbReference type="PDB" id="6PZV">
    <property type="method" value="X-ray"/>
    <property type="resolution" value="3.01 A"/>
    <property type="chains" value="C/G=349-594"/>
</dbReference>
<dbReference type="PDB" id="7LMK">
    <property type="method" value="X-ray"/>
    <property type="resolution" value="2.65 A"/>
    <property type="chains" value="A/B/C/D=725-837, A/B/C/D=859-897"/>
</dbReference>
<dbReference type="PDB" id="7LMM">
    <property type="method" value="X-ray"/>
    <property type="resolution" value="2.80 A"/>
    <property type="chains" value="A/B/C/D=725-837, A/B/C/D=859-897"/>
</dbReference>
<dbReference type="PDBsum" id="6PZV"/>
<dbReference type="PDBsum" id="7LMK"/>
<dbReference type="PDBsum" id="7LMM"/>
<dbReference type="SMR" id="Q24K09"/>
<dbReference type="BioGRID" id="158481">
    <property type="interactions" value="1"/>
</dbReference>
<dbReference type="FunCoup" id="Q24K09">
    <property type="interactions" value="2513"/>
</dbReference>
<dbReference type="STRING" id="9913.ENSBTAP00000003549"/>
<dbReference type="REBASE" id="7406">
    <property type="entry name" value="M.BtaDnmt1AP"/>
</dbReference>
<dbReference type="PaxDb" id="9913-ENSBTAP00000003549"/>
<dbReference type="GeneID" id="281119"/>
<dbReference type="KEGG" id="bta:281119"/>
<dbReference type="CTD" id="1786"/>
<dbReference type="eggNOG" id="ENOG502QPKK">
    <property type="taxonomic scope" value="Eukaryota"/>
</dbReference>
<dbReference type="HOGENOM" id="CLU_003040_0_0_1"/>
<dbReference type="InParanoid" id="Q24K09"/>
<dbReference type="OrthoDB" id="5376140at2759"/>
<dbReference type="TreeFam" id="TF328926"/>
<dbReference type="BRENDA" id="2.1.1.37">
    <property type="organism ID" value="908"/>
</dbReference>
<dbReference type="Proteomes" id="UP000009136">
    <property type="component" value="Unplaced"/>
</dbReference>
<dbReference type="GO" id="GO:0005634">
    <property type="term" value="C:nucleus"/>
    <property type="evidence" value="ECO:0000318"/>
    <property type="project" value="GO_Central"/>
</dbReference>
<dbReference type="GO" id="GO:0003886">
    <property type="term" value="F:DNA (cytosine-5-)-methyltransferase activity"/>
    <property type="evidence" value="ECO:0000250"/>
    <property type="project" value="UniProtKB"/>
</dbReference>
<dbReference type="GO" id="GO:0003677">
    <property type="term" value="F:DNA binding"/>
    <property type="evidence" value="ECO:0000318"/>
    <property type="project" value="GO_Central"/>
</dbReference>
<dbReference type="GO" id="GO:1990841">
    <property type="term" value="F:promoter-specific chromatin binding"/>
    <property type="evidence" value="ECO:0000250"/>
    <property type="project" value="UniProtKB"/>
</dbReference>
<dbReference type="GO" id="GO:0008270">
    <property type="term" value="F:zinc ion binding"/>
    <property type="evidence" value="ECO:0007669"/>
    <property type="project" value="UniProtKB-KW"/>
</dbReference>
<dbReference type="GO" id="GO:0006346">
    <property type="term" value="P:DNA methylation-dependent constitutive heterochromatin formation"/>
    <property type="evidence" value="ECO:0007669"/>
    <property type="project" value="InterPro"/>
</dbReference>
<dbReference type="GO" id="GO:0032259">
    <property type="term" value="P:methylation"/>
    <property type="evidence" value="ECO:0007669"/>
    <property type="project" value="UniProtKB-KW"/>
</dbReference>
<dbReference type="GO" id="GO:0044027">
    <property type="term" value="P:negative regulation of gene expression via chromosomal CpG island methylation"/>
    <property type="evidence" value="ECO:0000250"/>
    <property type="project" value="UniProtKB"/>
</dbReference>
<dbReference type="CDD" id="cd04760">
    <property type="entry name" value="BAH_Dnmt1_I"/>
    <property type="match status" value="1"/>
</dbReference>
<dbReference type="CDD" id="cd04711">
    <property type="entry name" value="BAH_Dnmt1_II"/>
    <property type="match status" value="1"/>
</dbReference>
<dbReference type="FunFam" id="1.10.10.2230:FF:000001">
    <property type="entry name" value="DNA (cytosine-5)-methyltransferase"/>
    <property type="match status" value="1"/>
</dbReference>
<dbReference type="FunFam" id="2.30.30.490:FF:000004">
    <property type="entry name" value="DNA (cytosine-5)-methyltransferase"/>
    <property type="match status" value="1"/>
</dbReference>
<dbReference type="FunFam" id="2.30.30.490:FF:000006">
    <property type="entry name" value="DNA (cytosine-5)-methyltransferase"/>
    <property type="match status" value="1"/>
</dbReference>
<dbReference type="FunFam" id="3.40.50.150:FF:000036">
    <property type="entry name" value="DNA (cytosine-5)-methyltransferase"/>
    <property type="match status" value="1"/>
</dbReference>
<dbReference type="FunFam" id="3.90.120.10:FF:000001">
    <property type="entry name" value="DNA (cytosine-5)-methyltransferase"/>
    <property type="match status" value="1"/>
</dbReference>
<dbReference type="Gene3D" id="1.10.10.2230">
    <property type="match status" value="1"/>
</dbReference>
<dbReference type="Gene3D" id="2.30.30.490">
    <property type="match status" value="2"/>
</dbReference>
<dbReference type="Gene3D" id="3.90.120.10">
    <property type="entry name" value="DNA Methylase, subunit A, domain 2"/>
    <property type="match status" value="1"/>
</dbReference>
<dbReference type="Gene3D" id="3.40.50.150">
    <property type="entry name" value="Vaccinia Virus protein VP39"/>
    <property type="match status" value="1"/>
</dbReference>
<dbReference type="InterPro" id="IPR001025">
    <property type="entry name" value="BAH_dom"/>
</dbReference>
<dbReference type="InterPro" id="IPR043151">
    <property type="entry name" value="BAH_sf"/>
</dbReference>
<dbReference type="InterPro" id="IPR050390">
    <property type="entry name" value="C5-Methyltransferase"/>
</dbReference>
<dbReference type="InterPro" id="IPR018117">
    <property type="entry name" value="C5_DNA_meth_AS"/>
</dbReference>
<dbReference type="InterPro" id="IPR001525">
    <property type="entry name" value="C5_MeTfrase"/>
</dbReference>
<dbReference type="InterPro" id="IPR031303">
    <property type="entry name" value="C5_meth_CS"/>
</dbReference>
<dbReference type="InterPro" id="IPR022702">
    <property type="entry name" value="Cytosine_MeTrfase1_RFD"/>
</dbReference>
<dbReference type="InterPro" id="IPR010506">
    <property type="entry name" value="DMAP1-bd"/>
</dbReference>
<dbReference type="InterPro" id="IPR017198">
    <property type="entry name" value="DNMT1-like"/>
</dbReference>
<dbReference type="InterPro" id="IPR029063">
    <property type="entry name" value="SAM-dependent_MTases_sf"/>
</dbReference>
<dbReference type="InterPro" id="IPR002857">
    <property type="entry name" value="Znf_CXXC"/>
</dbReference>
<dbReference type="PANTHER" id="PTHR10629">
    <property type="entry name" value="CYTOSINE-SPECIFIC METHYLTRANSFERASE"/>
    <property type="match status" value="1"/>
</dbReference>
<dbReference type="PANTHER" id="PTHR10629:SF52">
    <property type="entry name" value="DNA (CYTOSINE-5)-METHYLTRANSFERASE 1"/>
    <property type="match status" value="1"/>
</dbReference>
<dbReference type="Pfam" id="PF01426">
    <property type="entry name" value="BAH"/>
    <property type="match status" value="2"/>
</dbReference>
<dbReference type="Pfam" id="PF06464">
    <property type="entry name" value="DMAP_binding"/>
    <property type="match status" value="1"/>
</dbReference>
<dbReference type="Pfam" id="PF00145">
    <property type="entry name" value="DNA_methylase"/>
    <property type="match status" value="1"/>
</dbReference>
<dbReference type="Pfam" id="PF12047">
    <property type="entry name" value="DNMT1-RFD"/>
    <property type="match status" value="1"/>
</dbReference>
<dbReference type="Pfam" id="PF02008">
    <property type="entry name" value="zf-CXXC"/>
    <property type="match status" value="1"/>
</dbReference>
<dbReference type="PIRSF" id="PIRSF037404">
    <property type="entry name" value="DNMT1"/>
    <property type="match status" value="1"/>
</dbReference>
<dbReference type="PRINTS" id="PR00105">
    <property type="entry name" value="C5METTRFRASE"/>
</dbReference>
<dbReference type="SMART" id="SM00439">
    <property type="entry name" value="BAH"/>
    <property type="match status" value="2"/>
</dbReference>
<dbReference type="SMART" id="SM01137">
    <property type="entry name" value="DMAP_binding"/>
    <property type="match status" value="1"/>
</dbReference>
<dbReference type="SUPFAM" id="SSF53335">
    <property type="entry name" value="S-adenosyl-L-methionine-dependent methyltransferases"/>
    <property type="match status" value="1"/>
</dbReference>
<dbReference type="PROSITE" id="PS51038">
    <property type="entry name" value="BAH"/>
    <property type="match status" value="2"/>
</dbReference>
<dbReference type="PROSITE" id="PS00094">
    <property type="entry name" value="C5_MTASE_1"/>
    <property type="match status" value="1"/>
</dbReference>
<dbReference type="PROSITE" id="PS00095">
    <property type="entry name" value="C5_MTASE_2"/>
    <property type="match status" value="1"/>
</dbReference>
<dbReference type="PROSITE" id="PS51912">
    <property type="entry name" value="DMAP1_BIND"/>
    <property type="match status" value="1"/>
</dbReference>
<dbReference type="PROSITE" id="PS51679">
    <property type="entry name" value="SAM_MT_C5"/>
    <property type="match status" value="1"/>
</dbReference>
<dbReference type="PROSITE" id="PS51058">
    <property type="entry name" value="ZF_CXXC"/>
    <property type="match status" value="1"/>
</dbReference>
<name>DNMT1_BOVIN</name>
<comment type="function">
    <text evidence="2 3">Methylates CpG residues. Preferentially methylates hemimethylated DNA. Associates with DNA replication sites in S phase maintaining the methylation pattern in the newly synthesized strand, that is essential for epigenetic inheritance. Associates with chromatin during G2 and M phases to maintain DNA methylation independently of replication. It is responsible for maintaining methylation patterns established in development. DNA methylation is coordinated with methylation of histones. Mediates transcriptional repression by direct binding to HDAC2. In association with DNMT3B and via the recruitment of CTCFL/BORIS, involved in activation of BAG1 gene expression by modulating dimethylation of promoter histone H3 at H3K4 and H3K9. Probably forms a corepressor complex required for activated KRAS-mediated promoter hypermethylation and transcriptional silencing of tumor suppressor genes (TSGs) or other tumor-related genes in colorectal cancer (CRC) cells. Also required to maintain a transcriptionally repressive state of genes in undifferentiated embryonic stem cells (ESCs). Associates at promoter regions of tumor suppressor genes (TSGs) leading to their gene silencing. Promotes tumor growth.</text>
</comment>
<comment type="catalytic activity">
    <reaction evidence="9">
        <text>a 2'-deoxycytidine in DNA + S-adenosyl-L-methionine = a 5-methyl-2'-deoxycytidine in DNA + S-adenosyl-L-homocysteine + H(+)</text>
        <dbReference type="Rhea" id="RHEA:13681"/>
        <dbReference type="Rhea" id="RHEA-COMP:11369"/>
        <dbReference type="Rhea" id="RHEA-COMP:11370"/>
        <dbReference type="ChEBI" id="CHEBI:15378"/>
        <dbReference type="ChEBI" id="CHEBI:57856"/>
        <dbReference type="ChEBI" id="CHEBI:59789"/>
        <dbReference type="ChEBI" id="CHEBI:85452"/>
        <dbReference type="ChEBI" id="CHEBI:85454"/>
        <dbReference type="EC" id="2.1.1.37"/>
    </reaction>
</comment>
<comment type="subunit">
    <text evidence="2 3">Homodimer. Forms a stable complex with E2F1, BB1 and HDAC1. Forms a complex with DMAP1 and HDAC2, with direct interaction. Interacts with the PRC2/EED-EZH2 complex. Probably part of a corepressor complex containing ZNF304, TRIM28, SETDB1 and DNMT1. Interacts with UHRF1; promoting its recruitment to hemimethylated DNA. Interacts with USP7, promoting its deubiquitination. Interacts with PCNA. Interacts with MBD2 and MBD3. Interacts with DNMT3A and DNMT3B. Interacts with UBC9 (By similarity). Interacts with CSNK1D (By similarity). Interacts with HDAC1 (By similarity). Interacts with BAZ2A/TIP5 (By similarity). Interacts with SIRT7 (By similarity). Interacts with ZNF263; recruited to the SIX3 promoter along with other proteins involved in chromatin modification and transcriptional corepression where it contributes to transcriptional repression (By similarity). Interacts with L3MBTL3 and DCAF5; the interaction requires DNMT1 methylation at Lys-142 and is necessary to target DNMT1 for ubiquitination by the CRL4-DCAF5 E3 ubiquitin ligase complex and proteasomal degradation (By similarity). Interacts with PHF20L1; the interaction requires DNMT1 methylation at Lys-142 and protects DNMT1 from ubiquitination and proteasomal degradation (By similarity).</text>
</comment>
<comment type="subcellular location">
    <subcellularLocation>
        <location evidence="1">Nucleus</location>
    </subcellularLocation>
</comment>
<comment type="domain">
    <text>The N-terminal part is required for homodimerization and acts as a regulatory domain.</text>
</comment>
<comment type="domain">
    <text evidence="3">The CXXC-type zinc finger specifically binds to unmethylated CpG dinucleotides, positioning the autoinhibitory linker between the DNA and the active site, thus providing a mechanism to ensure that only hemimethylated CpG dinucleotides undergo methylation.</text>
</comment>
<comment type="PTM">
    <text evidence="3">Sumoylated; sumoylation increases activity.</text>
</comment>
<comment type="PTM">
    <text evidence="3">Acetylation on multiple lysines, mainly by KAT2B/PCAF, regulates cell cycle G(2)/M transition. Deacetylation of Lys-1346 and Lys-1412 by SIRT1 increases methyltransferase activity.</text>
</comment>
<comment type="PTM">
    <text evidence="3">Phosphorylation of Ser-154 by CDKs is important for enzymatic activity and protein stability. Phosphorylation of Ser-143 by AKT1 prevents methylation by SETD7 thereby increasing DNMT1 stability.</text>
</comment>
<comment type="PTM">
    <text evidence="3">Methylation at Lys-142 by SETD7 is necessary for the regulation of DNMT1 proteasomal degradation.</text>
</comment>
<comment type="PTM">
    <text evidence="2">Ubiquitinated by UHRF1; interaction with USP7 counteracts ubiquitination by UHRF1 by promoting deubiquitination and preventing degradation by the proteasome.</text>
</comment>
<comment type="similarity">
    <text evidence="7">Belongs to the class I-like SAM-binding methyltransferase superfamily. C5-methyltransferase family.</text>
</comment>
<reference key="1">
    <citation type="journal article" date="2003" name="Gene Expr. Patterns">
        <title>Analysis of DNA (cytosine 5) methyltransferase mRNA sequence and expression in bovine preimplantation embryos, fetal and adult tissues.</title>
        <authorList>
            <person name="Golding M.C."/>
            <person name="Westhusin M.E."/>
        </authorList>
    </citation>
    <scope>NUCLEOTIDE SEQUENCE [MRNA]</scope>
</reference>
<reference key="2">
    <citation type="submission" date="2002-11" db="EMBL/GenBank/DDBJ databases">
        <title>Bovine (Bos taurus) cytosine-5-methyltransferase (Dnmt1) cDNA.</title>
        <authorList>
            <person name="Lee P."/>
            <person name="Min K.S."/>
            <person name="Seong H.H."/>
            <person name="Park J.K."/>
            <person name="Lee Y.K."/>
            <person name="Kim S.W."/>
            <person name="Kim S.J."/>
            <person name="Lee H.G."/>
            <person name="Chung H.K."/>
            <person name="Chang Y.M."/>
            <person name="Chang W.K."/>
            <person name="Kwon M."/>
        </authorList>
    </citation>
    <scope>NUCLEOTIDE SEQUENCE [MRNA]</scope>
    <source>
        <tissue>Liver</tissue>
    </source>
</reference>
<reference key="3">
    <citation type="submission" date="2006-02" db="EMBL/GenBank/DDBJ databases">
        <authorList>
            <consortium name="NIH - Mammalian Gene Collection (MGC) project"/>
        </authorList>
    </citation>
    <scope>NUCLEOTIDE SEQUENCE [LARGE SCALE MRNA]</scope>
    <source>
        <strain>Hereford</strain>
        <tissue>Hypothalamus</tissue>
    </source>
</reference>
<protein>
    <recommendedName>
        <fullName>DNA (cytosine-5)-methyltransferase 1</fullName>
        <shortName>Dnmt1</shortName>
        <ecNumber>2.1.1.37</ecNumber>
    </recommendedName>
</protein>
<organism>
    <name type="scientific">Bos taurus</name>
    <name type="common">Bovine</name>
    <dbReference type="NCBI Taxonomy" id="9913"/>
    <lineage>
        <taxon>Eukaryota</taxon>
        <taxon>Metazoa</taxon>
        <taxon>Chordata</taxon>
        <taxon>Craniata</taxon>
        <taxon>Vertebrata</taxon>
        <taxon>Euteleostomi</taxon>
        <taxon>Mammalia</taxon>
        <taxon>Eutheria</taxon>
        <taxon>Laurasiatheria</taxon>
        <taxon>Artiodactyla</taxon>
        <taxon>Ruminantia</taxon>
        <taxon>Pecora</taxon>
        <taxon>Bovidae</taxon>
        <taxon>Bovinae</taxon>
        <taxon>Bos</taxon>
    </lineage>
</organism>
<keyword id="KW-0002">3D-structure</keyword>
<keyword id="KW-0007">Acetylation</keyword>
<keyword id="KW-0010">Activator</keyword>
<keyword id="KW-0156">Chromatin regulator</keyword>
<keyword id="KW-0238">DNA-binding</keyword>
<keyword id="KW-1017">Isopeptide bond</keyword>
<keyword id="KW-0479">Metal-binding</keyword>
<keyword id="KW-0488">Methylation</keyword>
<keyword id="KW-0489">Methyltransferase</keyword>
<keyword id="KW-0539">Nucleus</keyword>
<keyword id="KW-0597">Phosphoprotein</keyword>
<keyword id="KW-1185">Reference proteome</keyword>
<keyword id="KW-0677">Repeat</keyword>
<keyword id="KW-0678">Repressor</keyword>
<keyword id="KW-0949">S-adenosyl-L-methionine</keyword>
<keyword id="KW-0804">Transcription</keyword>
<keyword id="KW-0805">Transcription regulation</keyword>
<keyword id="KW-0808">Transferase</keyword>
<keyword id="KW-0832">Ubl conjugation</keyword>
<keyword id="KW-0862">Zinc</keyword>
<keyword id="KW-0863">Zinc-finger</keyword>
<feature type="chain" id="PRO_0000239845" description="DNA (cytosine-5)-methyltransferase 1">
    <location>
        <begin position="1"/>
        <end position="1611"/>
    </location>
</feature>
<feature type="domain" description="DMAP1-binding" evidence="8">
    <location>
        <begin position="16"/>
        <end position="109"/>
    </location>
</feature>
<feature type="domain" description="BAH 1" evidence="5">
    <location>
        <begin position="752"/>
        <end position="877"/>
    </location>
</feature>
<feature type="domain" description="BAH 2" evidence="5">
    <location>
        <begin position="969"/>
        <end position="1097"/>
    </location>
</feature>
<feature type="repeat" description="1">
    <location>
        <begin position="1106"/>
        <end position="1107"/>
    </location>
</feature>
<feature type="repeat" description="2">
    <location>
        <begin position="1108"/>
        <end position="1109"/>
    </location>
</feature>
<feature type="repeat" description="3">
    <location>
        <begin position="1110"/>
        <end position="1111"/>
    </location>
</feature>
<feature type="repeat" description="4">
    <location>
        <begin position="1112"/>
        <end position="1113"/>
    </location>
</feature>
<feature type="repeat" description="5; approximate">
    <location>
        <begin position="1114"/>
        <end position="1115"/>
    </location>
</feature>
<feature type="domain" description="SAM-dependent MTase C5-type" evidence="7">
    <location>
        <begin position="1136"/>
        <end position="1595"/>
    </location>
</feature>
<feature type="zinc finger region" description="CXXC-type" evidence="6">
    <location>
        <begin position="643"/>
        <end position="689"/>
    </location>
</feature>
<feature type="region of interest" description="Interaction with the PRC2/EED-EZH2 complex" evidence="1">
    <location>
        <begin position="1"/>
        <end position="334"/>
    </location>
</feature>
<feature type="region of interest" description="Interaction with DNMT3A" evidence="1">
    <location>
        <begin position="1"/>
        <end position="148"/>
    </location>
</feature>
<feature type="region of interest" description="Interaction with DMAP1" evidence="1">
    <location>
        <begin position="1"/>
        <end position="120"/>
    </location>
</feature>
<feature type="region of interest" description="Disordered" evidence="10">
    <location>
        <begin position="123"/>
        <end position="328"/>
    </location>
</feature>
<feature type="region of interest" description="Interaction with DNMT3B" evidence="1">
    <location>
        <begin position="149"/>
        <end position="216"/>
    </location>
</feature>
<feature type="region of interest" description="Interaction with PCNA" evidence="1">
    <location>
        <begin position="163"/>
        <end position="174"/>
    </location>
</feature>
<feature type="region of interest" description="Interaction with the PRC2/EED-EZH2 complex" evidence="1">
    <location>
        <begin position="306"/>
        <end position="603"/>
    </location>
</feature>
<feature type="region of interest" description="DNA replication foci-targeting sequence" evidence="1">
    <location>
        <begin position="329"/>
        <end position="548"/>
    </location>
</feature>
<feature type="region of interest" description="Disordered" evidence="10">
    <location>
        <begin position="594"/>
        <end position="614"/>
    </location>
</feature>
<feature type="region of interest" description="Autoinhibitory linker">
    <location>
        <begin position="690"/>
        <end position="751"/>
    </location>
</feature>
<feature type="region of interest" description="Disordered" evidence="10">
    <location>
        <begin position="695"/>
        <end position="726"/>
    </location>
</feature>
<feature type="region of interest" description="Disordered" evidence="10">
    <location>
        <begin position="1091"/>
        <end position="1126"/>
    </location>
</feature>
<feature type="region of interest" description="5 X 2 AA tandem repeats of K-G">
    <location>
        <begin position="1106"/>
        <end position="1115"/>
    </location>
</feature>
<feature type="region of interest" description="Interaction with the PRC2/EED-EZH2 complex" evidence="1">
    <location>
        <begin position="1118"/>
        <end position="1611"/>
    </location>
</feature>
<feature type="region of interest" description="Catalytic" evidence="1">
    <location>
        <begin position="1136"/>
        <end position="1611"/>
    </location>
</feature>
<feature type="short sequence motif" description="Nuclear localization signal" evidence="4">
    <location>
        <begin position="177"/>
        <end position="204"/>
    </location>
</feature>
<feature type="compositionally biased region" description="Low complexity" evidence="10">
    <location>
        <begin position="163"/>
        <end position="174"/>
    </location>
</feature>
<feature type="compositionally biased region" description="Basic and acidic residues" evidence="10">
    <location>
        <begin position="178"/>
        <end position="191"/>
    </location>
</feature>
<feature type="compositionally biased region" description="Basic and acidic residues" evidence="10">
    <location>
        <begin position="199"/>
        <end position="212"/>
    </location>
</feature>
<feature type="compositionally biased region" description="Basic and acidic residues" evidence="10">
    <location>
        <begin position="220"/>
        <end position="265"/>
    </location>
</feature>
<feature type="compositionally biased region" description="Basic and acidic residues" evidence="10">
    <location>
        <begin position="279"/>
        <end position="311"/>
    </location>
</feature>
<feature type="compositionally biased region" description="Basic and acidic residues" evidence="10">
    <location>
        <begin position="319"/>
        <end position="328"/>
    </location>
</feature>
<feature type="compositionally biased region" description="Acidic residues" evidence="10">
    <location>
        <begin position="696"/>
        <end position="706"/>
    </location>
</feature>
<feature type="compositionally biased region" description="Basic residues" evidence="10">
    <location>
        <begin position="713"/>
        <end position="725"/>
    </location>
</feature>
<feature type="compositionally biased region" description="Basic residues" evidence="10">
    <location>
        <begin position="1107"/>
        <end position="1117"/>
    </location>
</feature>
<feature type="active site" evidence="7 9">
    <location>
        <position position="1223"/>
    </location>
</feature>
<feature type="binding site" evidence="1">
    <location>
        <position position="351"/>
    </location>
    <ligand>
        <name>Zn(2+)</name>
        <dbReference type="ChEBI" id="CHEBI:29105"/>
    </ligand>
</feature>
<feature type="binding site" evidence="1">
    <location>
        <position position="354"/>
    </location>
    <ligand>
        <name>Zn(2+)</name>
        <dbReference type="ChEBI" id="CHEBI:29105"/>
    </ligand>
</feature>
<feature type="binding site" evidence="1">
    <location>
        <position position="412"/>
    </location>
    <ligand>
        <name>Zn(2+)</name>
        <dbReference type="ChEBI" id="CHEBI:29105"/>
    </ligand>
</feature>
<feature type="binding site" evidence="1">
    <location>
        <position position="416"/>
    </location>
    <ligand>
        <name>Zn(2+)</name>
        <dbReference type="ChEBI" id="CHEBI:29105"/>
    </ligand>
</feature>
<feature type="binding site" evidence="6">
    <location>
        <position position="650"/>
    </location>
    <ligand>
        <name>Zn(2+)</name>
        <dbReference type="ChEBI" id="CHEBI:29105"/>
        <label>1</label>
    </ligand>
</feature>
<feature type="binding site" evidence="6">
    <location>
        <position position="653"/>
    </location>
    <ligand>
        <name>Zn(2+)</name>
        <dbReference type="ChEBI" id="CHEBI:29105"/>
        <label>1</label>
    </ligand>
</feature>
<feature type="binding site" evidence="6">
    <location>
        <position position="656"/>
    </location>
    <ligand>
        <name>Zn(2+)</name>
        <dbReference type="ChEBI" id="CHEBI:29105"/>
        <label>1</label>
    </ligand>
</feature>
<feature type="binding site" evidence="6">
    <location>
        <position position="661"/>
    </location>
    <ligand>
        <name>Zn(2+)</name>
        <dbReference type="ChEBI" id="CHEBI:29105"/>
        <label>2</label>
    </ligand>
</feature>
<feature type="binding site" evidence="6">
    <location>
        <position position="664"/>
    </location>
    <ligand>
        <name>Zn(2+)</name>
        <dbReference type="ChEBI" id="CHEBI:29105"/>
        <label>2</label>
    </ligand>
</feature>
<feature type="binding site" evidence="6">
    <location>
        <position position="667"/>
    </location>
    <ligand>
        <name>Zn(2+)</name>
        <dbReference type="ChEBI" id="CHEBI:29105"/>
        <label>2</label>
    </ligand>
</feature>
<feature type="binding site" evidence="6">
    <location>
        <position position="683"/>
    </location>
    <ligand>
        <name>Zn(2+)</name>
        <dbReference type="ChEBI" id="CHEBI:29105"/>
        <label>2</label>
    </ligand>
</feature>
<feature type="binding site" evidence="6">
    <location>
        <position position="688"/>
    </location>
    <ligand>
        <name>Zn(2+)</name>
        <dbReference type="ChEBI" id="CHEBI:29105"/>
        <label>1</label>
    </ligand>
</feature>
<feature type="binding site" evidence="2">
    <location>
        <position position="1143"/>
    </location>
    <ligand>
        <name>S-adenosyl-L-methionine</name>
        <dbReference type="ChEBI" id="CHEBI:59789"/>
    </ligand>
</feature>
<feature type="binding site" evidence="2">
    <location>
        <begin position="1147"/>
        <end position="1148"/>
    </location>
    <ligand>
        <name>S-adenosyl-L-methionine</name>
        <dbReference type="ChEBI" id="CHEBI:59789"/>
    </ligand>
</feature>
<feature type="binding site" evidence="3">
    <location>
        <begin position="1165"/>
        <end position="1166"/>
    </location>
    <ligand>
        <name>S-adenosyl-L-methionine</name>
        <dbReference type="ChEBI" id="CHEBI:59789"/>
    </ligand>
</feature>
<feature type="binding site" evidence="2">
    <location>
        <begin position="1187"/>
        <end position="1188"/>
    </location>
    <ligand>
        <name>S-adenosyl-L-methionine</name>
        <dbReference type="ChEBI" id="CHEBI:59789"/>
    </ligand>
</feature>
<feature type="binding site" evidence="3">
    <location>
        <position position="1188"/>
    </location>
    <ligand>
        <name>S-adenosyl-L-methionine</name>
        <dbReference type="ChEBI" id="CHEBI:59789"/>
    </ligand>
</feature>
<feature type="binding site" evidence="3">
    <location>
        <position position="1574"/>
    </location>
    <ligand>
        <name>S-adenosyl-L-methionine</name>
        <dbReference type="ChEBI" id="CHEBI:59789"/>
    </ligand>
</feature>
<feature type="binding site" evidence="2">
    <location>
        <position position="1576"/>
    </location>
    <ligand>
        <name>S-adenosyl-L-methionine</name>
        <dbReference type="ChEBI" id="CHEBI:59789"/>
    </ligand>
</feature>
<feature type="site" description="Important for activity" evidence="1">
    <location>
        <position position="507"/>
    </location>
</feature>
<feature type="modified residue" description="Phosphoserine" evidence="2">
    <location>
        <position position="15"/>
    </location>
</feature>
<feature type="modified residue" description="N6,N6-dimethyllysine; by EHMT2" evidence="3">
    <location>
        <position position="70"/>
    </location>
</feature>
<feature type="modified residue" description="Phosphoserine" evidence="3">
    <location>
        <position position="133"/>
    </location>
</feature>
<feature type="modified residue" description="Phosphothreonine" evidence="3">
    <location>
        <position position="137"/>
    </location>
</feature>
<feature type="modified residue" description="Phosphoserine" evidence="2">
    <location>
        <position position="141"/>
    </location>
</feature>
<feature type="modified residue" description="N6-methyllysine; by SETD7" evidence="3">
    <location>
        <position position="142"/>
    </location>
</feature>
<feature type="modified residue" description="Phosphoserine; by PKB/AKT1" evidence="3">
    <location>
        <position position="143"/>
    </location>
</feature>
<feature type="modified residue" description="Phosphoserine" evidence="3">
    <location>
        <position position="152"/>
    </location>
</feature>
<feature type="modified residue" description="Phosphoserine" evidence="3">
    <location>
        <position position="154"/>
    </location>
</feature>
<feature type="modified residue" description="N6-acetyllysine" evidence="3">
    <location>
        <position position="160"/>
    </location>
</feature>
<feature type="modified residue" description="Phosphothreonine" evidence="3">
    <location>
        <position position="166"/>
    </location>
</feature>
<feature type="modified residue" description="N6-acetyllysine" evidence="3">
    <location>
        <position position="188"/>
    </location>
</feature>
<feature type="modified residue" description="N6-acetyllysine; alternate" evidence="3">
    <location>
        <position position="257"/>
    </location>
</feature>
<feature type="modified residue" description="Phosphoserine" evidence="3">
    <location>
        <position position="310"/>
    </location>
</feature>
<feature type="modified residue" description="Phosphoserine" evidence="3">
    <location>
        <position position="392"/>
    </location>
</feature>
<feature type="modified residue" description="Phosphoserine" evidence="3">
    <location>
        <position position="396"/>
    </location>
</feature>
<feature type="modified residue" description="Phosphoserine" evidence="2">
    <location>
        <position position="507"/>
    </location>
</feature>
<feature type="modified residue" description="Phosphoserine" evidence="3">
    <location>
        <position position="547"/>
    </location>
</feature>
<feature type="modified residue" description="Phosphoserine" evidence="3">
    <location>
        <position position="711"/>
    </location>
</feature>
<feature type="modified residue" description="Phosphoserine" evidence="3">
    <location>
        <position position="729"/>
    </location>
</feature>
<feature type="modified residue" description="N6-acetyllysine" evidence="3">
    <location>
        <position position="746"/>
    </location>
</feature>
<feature type="modified residue" description="Phosphoserine" evidence="3">
    <location>
        <position position="875"/>
    </location>
</feature>
<feature type="modified residue" description="N6-acetyllysine" evidence="3">
    <location>
        <position position="888"/>
    </location>
</feature>
<feature type="modified residue" description="N6-acetyllysine" evidence="3">
    <location>
        <position position="954"/>
    </location>
</feature>
<feature type="modified residue" description="N6-acetyllysine" evidence="3">
    <location>
        <position position="958"/>
    </location>
</feature>
<feature type="modified residue" description="N6-acetyllysine" evidence="3">
    <location>
        <position position="972"/>
    </location>
</feature>
<feature type="modified residue" description="N6-acetyllysine" evidence="3">
    <location>
        <position position="1051"/>
    </location>
</feature>
<feature type="modified residue" description="N6-acetyllysine" evidence="3">
    <location>
        <position position="1108"/>
    </location>
</feature>
<feature type="modified residue" description="N6-acetyllysine" evidence="3">
    <location>
        <position position="1110"/>
    </location>
</feature>
<feature type="modified residue" description="N6-acetyllysine" evidence="3">
    <location>
        <position position="1112"/>
    </location>
</feature>
<feature type="modified residue" description="N6-acetyllysine" evidence="3">
    <location>
        <position position="1114"/>
    </location>
</feature>
<feature type="modified residue" description="N6-acetyllysine" evidence="2">
    <location>
        <position position="1118"/>
    </location>
</feature>
<feature type="modified residue" description="N6-acetyllysine" evidence="3">
    <location>
        <position position="1346"/>
    </location>
</feature>
<feature type="modified residue" description="N6-acetyllysine" evidence="3">
    <location>
        <position position="1412"/>
    </location>
</feature>
<feature type="cross-link" description="Glycyl lysine isopeptide (Lys-Gly) (interchain with G-Cter in SUMO2); alternate" evidence="3">
    <location>
        <position position="257"/>
    </location>
</feature>
<feature type="cross-link" description="Glycyl lysine isopeptide (Lys-Gly) (interchain with G-Cter in SUMO2)" evidence="3">
    <location>
        <position position="1605"/>
    </location>
</feature>
<feature type="sequence conflict" description="In Ref. 2; AAO44952." evidence="11" ref="2">
    <original>I</original>
    <variation>V</variation>
    <location>
        <position position="655"/>
    </location>
</feature>
<feature type="sequence conflict" description="In Ref. 2; AAO44952." evidence="11" ref="2">
    <original>H</original>
    <variation>R</variation>
    <location>
        <position position="716"/>
    </location>
</feature>
<feature type="sequence conflict" description="In Ref. 2; AAO44952." evidence="11" ref="2">
    <original>T</original>
    <variation>A</variation>
    <location>
        <position position="777"/>
    </location>
</feature>
<feature type="sequence conflict" description="In Ref. 1; AAP20551." evidence="11" ref="1">
    <original>L</original>
    <variation>F</variation>
    <location>
        <position position="1176"/>
    </location>
</feature>
<feature type="sequence conflict" description="In Ref. 1; AAP20551." evidence="11" ref="1">
    <original>E</original>
    <variation>K</variation>
    <location>
        <position position="1186"/>
    </location>
</feature>
<feature type="sequence conflict" description="In Ref. 1; AAP20551." evidence="11" ref="1">
    <original>L</original>
    <variation>V</variation>
    <location>
        <position position="1192"/>
    </location>
</feature>
<feature type="sequence conflict" description="In Ref. 1; AAP20551." evidence="11" ref="1">
    <original>P</original>
    <variation>L</variation>
    <location>
        <position position="1209"/>
    </location>
</feature>
<feature type="sequence conflict" description="In Ref. 1; AAP20551." evidence="11" ref="1">
    <original>M</original>
    <variation>R</variation>
    <location>
        <position position="1287"/>
    </location>
</feature>
<feature type="sequence conflict" description="In Ref. 1; AAP20551." evidence="11" ref="1">
    <original>G</original>
    <variation>R</variation>
    <location>
        <position position="1387"/>
    </location>
</feature>
<feature type="sequence conflict" description="In Ref. 2; AAO44952." evidence="11" ref="2">
    <original>I</original>
    <variation>T</variation>
    <location>
        <position position="1405"/>
    </location>
</feature>
<feature type="sequence conflict" description="In Ref. 2; AAO44952." evidence="11" ref="2">
    <original>S</original>
    <variation>T</variation>
    <location>
        <position position="1466"/>
    </location>
</feature>
<feature type="turn" evidence="12">
    <location>
        <begin position="352"/>
        <end position="354"/>
    </location>
</feature>
<feature type="strand" evidence="12">
    <location>
        <begin position="357"/>
        <end position="359"/>
    </location>
</feature>
<feature type="helix" evidence="12">
    <location>
        <begin position="375"/>
        <end position="378"/>
    </location>
</feature>
<feature type="helix" evidence="12">
    <location>
        <begin position="382"/>
        <end position="384"/>
    </location>
</feature>
<feature type="strand" evidence="12">
    <location>
        <begin position="402"/>
        <end position="411"/>
    </location>
</feature>
<feature type="strand" evidence="12">
    <location>
        <begin position="415"/>
        <end position="417"/>
    </location>
</feature>
<feature type="strand" evidence="12">
    <location>
        <begin position="420"/>
        <end position="423"/>
    </location>
</feature>
<feature type="turn" evidence="12">
    <location>
        <begin position="424"/>
        <end position="428"/>
    </location>
</feature>
<feature type="strand" evidence="12">
    <location>
        <begin position="432"/>
        <end position="438"/>
    </location>
</feature>
<feature type="strand" evidence="12">
    <location>
        <begin position="450"/>
        <end position="456"/>
    </location>
</feature>
<feature type="strand" evidence="12">
    <location>
        <begin position="460"/>
        <end position="465"/>
    </location>
</feature>
<feature type="strand" evidence="12">
    <location>
        <begin position="474"/>
        <end position="478"/>
    </location>
</feature>
<feature type="strand" evidence="12">
    <location>
        <begin position="483"/>
        <end position="486"/>
    </location>
</feature>
<feature type="turn" evidence="12">
    <location>
        <begin position="491"/>
        <end position="493"/>
    </location>
</feature>
<feature type="helix" evidence="12">
    <location>
        <begin position="494"/>
        <end position="516"/>
    </location>
</feature>
<feature type="helix" evidence="12">
    <location>
        <begin position="522"/>
        <end position="531"/>
    </location>
</feature>
<feature type="helix" evidence="12">
    <location>
        <begin position="536"/>
        <end position="538"/>
    </location>
</feature>
<feature type="helix" evidence="12">
    <location>
        <begin position="545"/>
        <end position="549"/>
    </location>
</feature>
<feature type="helix" evidence="12">
    <location>
        <begin position="552"/>
        <end position="564"/>
    </location>
</feature>
<feature type="helix" evidence="12">
    <location>
        <begin position="577"/>
        <end position="586"/>
    </location>
</feature>
<feature type="strand" evidence="13">
    <location>
        <begin position="728"/>
        <end position="733"/>
    </location>
</feature>
<feature type="strand" evidence="13">
    <location>
        <begin position="735"/>
        <end position="737"/>
    </location>
</feature>
<feature type="strand" evidence="13">
    <location>
        <begin position="739"/>
        <end position="749"/>
    </location>
</feature>
<feature type="strand" evidence="13">
    <location>
        <begin position="752"/>
        <end position="755"/>
    </location>
</feature>
<feature type="strand" evidence="13">
    <location>
        <begin position="759"/>
        <end position="762"/>
    </location>
</feature>
<feature type="strand" evidence="13">
    <location>
        <begin position="772"/>
        <end position="782"/>
    </location>
</feature>
<feature type="turn" evidence="13">
    <location>
        <begin position="783"/>
        <end position="785"/>
    </location>
</feature>
<feature type="strand" evidence="13">
    <location>
        <begin position="786"/>
        <end position="795"/>
    </location>
</feature>
<feature type="helix" evidence="13">
    <location>
        <begin position="797"/>
        <end position="799"/>
    </location>
</feature>
<feature type="strand" evidence="13">
    <location>
        <begin position="812"/>
        <end position="821"/>
    </location>
</feature>
<feature type="helix" evidence="13">
    <location>
        <begin position="822"/>
        <end position="824"/>
    </location>
</feature>
<feature type="strand" evidence="13">
    <location>
        <begin position="825"/>
        <end position="829"/>
    </location>
</feature>
<feature type="strand" evidence="13">
    <location>
        <begin position="865"/>
        <end position="867"/>
    </location>
</feature>
<feature type="turn" evidence="13">
    <location>
        <begin position="868"/>
        <end position="871"/>
    </location>
</feature>
<feature type="strand" evidence="13">
    <location>
        <begin position="872"/>
        <end position="875"/>
    </location>
</feature>
<feature type="turn" evidence="13">
    <location>
        <begin position="883"/>
        <end position="885"/>
    </location>
</feature>
<feature type="helix" evidence="13">
    <location>
        <begin position="886"/>
        <end position="888"/>
    </location>
</feature>
<feature type="helix" evidence="13">
    <location>
        <begin position="891"/>
        <end position="896"/>
    </location>
</feature>
<proteinExistence type="evidence at protein level"/>
<sequence length="1611" mass="182842">MPARTAPARVPALASRAFSLPDDVRRRLKDLERDSLTEKECVKEKLNLLHEFLRTEIKNQLCDLETKLHKEELSEEGYLAKVKSLLNKDLSLENGAHAFSREANGCLENGSQTSGEDCRVVMAEKGKPPKPVSRLYTPRRSKSDGETKSEVSSSPRITRKTTRQTTITSHFPRGPAKRKPEEEPEKVKSDDSVDEEKDQEEKRRRVTSRERVAGLLPAEEPGRVRPGTHMEEEGRDDKEEKRLRSQTKEPTPKHKAKEEPDRDVRPGGAQAEMNEGEDKDEKRHRSQPKDLASKRRPEEKEPERVKPQVSDEKDEDEKEEKRRRTTYRELTEKKMTRTKIAVVSKTNPPKCTECLQYLDDPELRYEQHPPDAVEEIQILTNERLSIFDANESGFESYEDLPQHKLTCFSVYCKRGHLCPIDTGLIEKDVELLFSGSAKPIYEDDPSPEGGINGKNFGPINEWWIAGFDGGEKALLGFSTSFAEYILMDPSPEYAPLFSVMQEKIYISKIVVEFLQSNPDSTYEDLINKIETTVPPCMLNLNRFTEDSLLRHAQFVVEQVESYDRAGDSDEQPIFLSPCMRDLIKLAGVTLGKRRAERRQTIRQPAKEKDKGPTKATTTKLVYQIFDTFFAEQIEKDDKEDKENAFKRRRCGVCEICQQPECGKCKACKDMVKFGGSGRSKQACQKRRCPNMAMKEADDDEEVDDNIPEMPSPKKMHQGKKKKQNKNRISWVGDAVKTDGKKSYYKKVCIDSETLEVGDCVSVIPDDSSKPLYLARVTALWEDSSNGQMFHAHWFCAGTDTVLGATSDPLELFLVDECEDMQLSYIHSKVQVIYKAPSENWAMEGGVDPEALMSEDDGKTYFYQLWYDQDYARFESPPKTQPTEDNKYKFCASCARLAEMRQKEIPRVVEQLQDLEGRVLYSLATKNGVQYRVGDGVYLPPEAFTFNIKLSSPVKRPRKEPVDEALYPEHYRKYSDYIKGSNLDAPEPYRIGRIKEIFCSKKSNGRPNETDIKIRVNKFYRPENTHKSTPASYHADINLLYWSDEEAVVDFKAVQGRCTVEYGEDLPQCLQDFSAGGPDRFYFLEAYNAKSKSFEDPPNHARSTGNKGKGKGKGKNRTKSQTCEPSELETEIKLPKLRTLDVFSGCGGLSEGFHQAGISETLWAIEMWDPAAQAFRLNNPGSTVFTEDCNVLLKLVMAGEVTNSRGQKLPQKGDVEMLCGGPPCQGFSGMNRFNSRTYSKFKNSLVVSFLSYCDYYRPRYFLLENVRNFVSFKRSMVLKLTLRCLVRMGYQCTFGVLQAGQYGVAQTRRRAIILAAAPGEPLPLFPEPLHVFAPRACQLSVVVDDKKFVSNITRLSSGPFRTITVRDTMSDLPEIRNGASALEISYNGEPQSWFQRQLRGSQYQPILRDHICKDMSALVAARMRHIPLAPGSDWRDLPNIEVRLSDGTLARKLRYNYHDKKNGCSSSGALRGVCSCVEGKPCEPAARQFNTLIPWCLPHTGNRHNHWAGLYGRLEWDGFFSTTVTNPEPMGKQGRVLHPEQHRVVSVRECARSQGFPDTYRLFGNILDKHRQVGNAVPPPLAKAIGLEIKRCMLAKARESASAKIKEEAAKD</sequence>
<accession>Q24K09</accession>
<accession>Q6Y856</accession>
<accession>Q7YS60</accession>
<gene>
    <name type="primary">DNMT1</name>
</gene>